<dbReference type="EMBL" id="CP000423">
    <property type="protein sequence ID" value="ABJ71228.1"/>
    <property type="molecule type" value="Genomic_DNA"/>
</dbReference>
<dbReference type="RefSeq" id="WP_003567544.1">
    <property type="nucleotide sequence ID" value="NC_008526.1"/>
</dbReference>
<dbReference type="RefSeq" id="YP_807670.1">
    <property type="nucleotide sequence ID" value="NC_008526.1"/>
</dbReference>
<dbReference type="SMR" id="Q034Z4"/>
<dbReference type="STRING" id="321967.LSEI_2492"/>
<dbReference type="PaxDb" id="321967-LSEI_2492"/>
<dbReference type="GeneID" id="57091071"/>
<dbReference type="KEGG" id="lca:LSEI_2492"/>
<dbReference type="PATRIC" id="fig|321967.11.peg.2446"/>
<dbReference type="HOGENOM" id="CLU_093315_2_0_9"/>
<dbReference type="Proteomes" id="UP000001651">
    <property type="component" value="Chromosome"/>
</dbReference>
<dbReference type="GO" id="GO:1990904">
    <property type="term" value="C:ribonucleoprotein complex"/>
    <property type="evidence" value="ECO:0007669"/>
    <property type="project" value="UniProtKB-KW"/>
</dbReference>
<dbReference type="GO" id="GO:0005840">
    <property type="term" value="C:ribosome"/>
    <property type="evidence" value="ECO:0007669"/>
    <property type="project" value="UniProtKB-KW"/>
</dbReference>
<dbReference type="GO" id="GO:0019843">
    <property type="term" value="F:rRNA binding"/>
    <property type="evidence" value="ECO:0007669"/>
    <property type="project" value="UniProtKB-UniRule"/>
</dbReference>
<dbReference type="GO" id="GO:0003735">
    <property type="term" value="F:structural constituent of ribosome"/>
    <property type="evidence" value="ECO:0007669"/>
    <property type="project" value="InterPro"/>
</dbReference>
<dbReference type="GO" id="GO:0006412">
    <property type="term" value="P:translation"/>
    <property type="evidence" value="ECO:0007669"/>
    <property type="project" value="UniProtKB-UniRule"/>
</dbReference>
<dbReference type="CDD" id="cd06089">
    <property type="entry name" value="KOW_RPL26"/>
    <property type="match status" value="1"/>
</dbReference>
<dbReference type="FunFam" id="2.30.30.30:FF:000004">
    <property type="entry name" value="50S ribosomal protein L24"/>
    <property type="match status" value="1"/>
</dbReference>
<dbReference type="Gene3D" id="2.30.30.30">
    <property type="match status" value="1"/>
</dbReference>
<dbReference type="HAMAP" id="MF_01326_B">
    <property type="entry name" value="Ribosomal_uL24_B"/>
    <property type="match status" value="1"/>
</dbReference>
<dbReference type="InterPro" id="IPR005824">
    <property type="entry name" value="KOW"/>
</dbReference>
<dbReference type="InterPro" id="IPR014722">
    <property type="entry name" value="Rib_uL2_dom2"/>
</dbReference>
<dbReference type="InterPro" id="IPR003256">
    <property type="entry name" value="Ribosomal_uL24"/>
</dbReference>
<dbReference type="InterPro" id="IPR005825">
    <property type="entry name" value="Ribosomal_uL24_CS"/>
</dbReference>
<dbReference type="InterPro" id="IPR041988">
    <property type="entry name" value="Ribosomal_uL24_KOW"/>
</dbReference>
<dbReference type="InterPro" id="IPR008991">
    <property type="entry name" value="Translation_prot_SH3-like_sf"/>
</dbReference>
<dbReference type="NCBIfam" id="TIGR01079">
    <property type="entry name" value="rplX_bact"/>
    <property type="match status" value="1"/>
</dbReference>
<dbReference type="PANTHER" id="PTHR12903">
    <property type="entry name" value="MITOCHONDRIAL RIBOSOMAL PROTEIN L24"/>
    <property type="match status" value="1"/>
</dbReference>
<dbReference type="Pfam" id="PF00467">
    <property type="entry name" value="KOW"/>
    <property type="match status" value="1"/>
</dbReference>
<dbReference type="Pfam" id="PF17136">
    <property type="entry name" value="ribosomal_L24"/>
    <property type="match status" value="1"/>
</dbReference>
<dbReference type="SMART" id="SM00739">
    <property type="entry name" value="KOW"/>
    <property type="match status" value="1"/>
</dbReference>
<dbReference type="SUPFAM" id="SSF50104">
    <property type="entry name" value="Translation proteins SH3-like domain"/>
    <property type="match status" value="1"/>
</dbReference>
<dbReference type="PROSITE" id="PS01108">
    <property type="entry name" value="RIBOSOMAL_L24"/>
    <property type="match status" value="1"/>
</dbReference>
<keyword id="KW-1185">Reference proteome</keyword>
<keyword id="KW-0687">Ribonucleoprotein</keyword>
<keyword id="KW-0689">Ribosomal protein</keyword>
<keyword id="KW-0694">RNA-binding</keyword>
<keyword id="KW-0699">rRNA-binding</keyword>
<proteinExistence type="inferred from homology"/>
<reference key="1">
    <citation type="journal article" date="2006" name="Proc. Natl. Acad. Sci. U.S.A.">
        <title>Comparative genomics of the lactic acid bacteria.</title>
        <authorList>
            <person name="Makarova K.S."/>
            <person name="Slesarev A."/>
            <person name="Wolf Y.I."/>
            <person name="Sorokin A."/>
            <person name="Mirkin B."/>
            <person name="Koonin E.V."/>
            <person name="Pavlov A."/>
            <person name="Pavlova N."/>
            <person name="Karamychev V."/>
            <person name="Polouchine N."/>
            <person name="Shakhova V."/>
            <person name="Grigoriev I."/>
            <person name="Lou Y."/>
            <person name="Rohksar D."/>
            <person name="Lucas S."/>
            <person name="Huang K."/>
            <person name="Goodstein D.M."/>
            <person name="Hawkins T."/>
            <person name="Plengvidhya V."/>
            <person name="Welker D."/>
            <person name="Hughes J."/>
            <person name="Goh Y."/>
            <person name="Benson A."/>
            <person name="Baldwin K."/>
            <person name="Lee J.-H."/>
            <person name="Diaz-Muniz I."/>
            <person name="Dosti B."/>
            <person name="Smeianov V."/>
            <person name="Wechter W."/>
            <person name="Barabote R."/>
            <person name="Lorca G."/>
            <person name="Altermann E."/>
            <person name="Barrangou R."/>
            <person name="Ganesan B."/>
            <person name="Xie Y."/>
            <person name="Rawsthorne H."/>
            <person name="Tamir D."/>
            <person name="Parker C."/>
            <person name="Breidt F."/>
            <person name="Broadbent J.R."/>
            <person name="Hutkins R."/>
            <person name="O'Sullivan D."/>
            <person name="Steele J."/>
            <person name="Unlu G."/>
            <person name="Saier M.H. Jr."/>
            <person name="Klaenhammer T."/>
            <person name="Richardson P."/>
            <person name="Kozyavkin S."/>
            <person name="Weimer B.C."/>
            <person name="Mills D.A."/>
        </authorList>
    </citation>
    <scope>NUCLEOTIDE SEQUENCE [LARGE SCALE GENOMIC DNA]</scope>
    <source>
        <strain>ATCC 334 / BCRC 17002 / CCUG 31169 / CIP 107868 / KCTC 3260 / NRRL B-441</strain>
    </source>
</reference>
<name>RL24_LACP3</name>
<accession>Q034Z4</accession>
<sequence>MKFKTGDKVRVMRGKDAGKEGQITKVLKDADKVVVEGINMIKKHQKPNNANPQGGIIDKEAPIHVSNVMLLDPDTNKPTRIGSEVKDGNKVRIAKKSGTAIDK</sequence>
<protein>
    <recommendedName>
        <fullName evidence="1">Large ribosomal subunit protein uL24</fullName>
    </recommendedName>
    <alternativeName>
        <fullName evidence="2">50S ribosomal protein L24</fullName>
    </alternativeName>
</protein>
<organism>
    <name type="scientific">Lacticaseibacillus paracasei (strain ATCC 334 / BCRC 17002 / CCUG 31169 / CIP 107868 / KCTC 3260 / NRRL B-441)</name>
    <name type="common">Lactobacillus paracasei</name>
    <dbReference type="NCBI Taxonomy" id="321967"/>
    <lineage>
        <taxon>Bacteria</taxon>
        <taxon>Bacillati</taxon>
        <taxon>Bacillota</taxon>
        <taxon>Bacilli</taxon>
        <taxon>Lactobacillales</taxon>
        <taxon>Lactobacillaceae</taxon>
        <taxon>Lacticaseibacillus</taxon>
    </lineage>
</organism>
<evidence type="ECO:0000255" key="1">
    <source>
        <dbReference type="HAMAP-Rule" id="MF_01326"/>
    </source>
</evidence>
<evidence type="ECO:0000305" key="2"/>
<gene>
    <name evidence="1" type="primary">rplX</name>
    <name type="ordered locus">LSEI_2492</name>
</gene>
<comment type="function">
    <text evidence="1">One of two assembly initiator proteins, it binds directly to the 5'-end of the 23S rRNA, where it nucleates assembly of the 50S subunit.</text>
</comment>
<comment type="function">
    <text evidence="1">One of the proteins that surrounds the polypeptide exit tunnel on the outside of the subunit.</text>
</comment>
<comment type="subunit">
    <text evidence="1">Part of the 50S ribosomal subunit.</text>
</comment>
<comment type="similarity">
    <text evidence="1">Belongs to the universal ribosomal protein uL24 family.</text>
</comment>
<feature type="chain" id="PRO_1000052233" description="Large ribosomal subunit protein uL24">
    <location>
        <begin position="1"/>
        <end position="103"/>
    </location>
</feature>